<sequence length="482" mass="53180">MAADQVTISDEPKGGGVTADAAVKAIKAGRNKDVDIAAQIVSDYADQMDGDTWSVEEERKLIRRIDWRLIPTLFVCATLSGLDKTAISAAAVYNIKTDLNLTGAEYSWIGSAPFFGGLLFMGPLAYCLQRVPAVPFFAFNVLCWGILEMSVTMVVSMWYRPEEQPKRNSIILNVVAPIINGFVAWVVGYYKGPYERWKIIFLLVGALTIVTSVVVYFVLPNNPLEAKFLTPREKYIVIQRKAADNTGIESKTFKMEQVWEAIFDIKTWLIWIAIAALQVPNGGLTTFNTLIISGLGFDSLQTSLLAMPPGAMSTLSGIGLSYLAATTRRYRTAIVTVSILLPLFGAVLCYALPRTNLAGQLVGLYILYTYWAPYVTLVSVYQANVAGHTKKITLYAWFYIAWATGNIIGPQTFRADQAPEYTGGTVAMIICYVVAMFAITAYGVVCHLSNKKRAEAIEARTAADHDWLDMTDKENVGFKYTT</sequence>
<keyword id="KW-1003">Cell membrane</keyword>
<keyword id="KW-0325">Glycoprotein</keyword>
<keyword id="KW-0472">Membrane</keyword>
<keyword id="KW-1185">Reference proteome</keyword>
<keyword id="KW-0812">Transmembrane</keyword>
<keyword id="KW-1133">Transmembrane helix</keyword>
<keyword id="KW-0813">Transport</keyword>
<gene>
    <name evidence="4" type="primary">cnsL</name>
    <name type="ORF">PEX2_055460</name>
</gene>
<reference key="1">
    <citation type="journal article" date="2015" name="Mol. Plant Microbe Interact.">
        <title>Genome, transcriptome, and functional analyses of Penicillium expansum provide new insights into secondary metabolism and pathogenicity.</title>
        <authorList>
            <person name="Ballester A.R."/>
            <person name="Marcet-Houben M."/>
            <person name="Levin E."/>
            <person name="Sela N."/>
            <person name="Selma-Lazaro C."/>
            <person name="Carmona L."/>
            <person name="Wisniewski M."/>
            <person name="Droby S."/>
            <person name="Gonzalez-Candelas L."/>
            <person name="Gabaldon T."/>
        </authorList>
    </citation>
    <scope>NUCLEOTIDE SEQUENCE [LARGE SCALE GENOMIC DNA]</scope>
    <source>
        <strain>MD-8</strain>
    </source>
</reference>
<reference key="2">
    <citation type="journal article" date="2015" name="Angew. Chem. Int. Ed.">
        <title>Elucidation of the concise biosynthetic pathway of the communesin indole alkaloids.</title>
        <authorList>
            <person name="Lin H.C."/>
            <person name="Chiou G."/>
            <person name="Chooi Y.H."/>
            <person name="McMahon T.C."/>
            <person name="Xu W."/>
            <person name="Garg N.K."/>
            <person name="Tang Y."/>
        </authorList>
    </citation>
    <scope>IDENTIFICATION</scope>
    <scope>FUNCTION</scope>
</reference>
<proteinExistence type="inferred from homology"/>
<dbReference type="EMBL" id="JQFZ01000090">
    <property type="protein sequence ID" value="KGO59705.1"/>
    <property type="molecule type" value="Genomic_DNA"/>
</dbReference>
<dbReference type="RefSeq" id="XP_016600818.1">
    <property type="nucleotide sequence ID" value="XM_016742820.1"/>
</dbReference>
<dbReference type="STRING" id="27334.A0A0A2K5R6"/>
<dbReference type="GlyCosmos" id="A0A0A2K5R6">
    <property type="glycosylation" value="1 site, No reported glycans"/>
</dbReference>
<dbReference type="GeneID" id="27678239"/>
<dbReference type="VEuPathDB" id="FungiDB:PEXP_030570"/>
<dbReference type="HOGENOM" id="CLU_001265_0_5_1"/>
<dbReference type="Proteomes" id="UP000030143">
    <property type="component" value="Unassembled WGS sequence"/>
</dbReference>
<dbReference type="GO" id="GO:0005886">
    <property type="term" value="C:plasma membrane"/>
    <property type="evidence" value="ECO:0007669"/>
    <property type="project" value="UniProtKB-SubCell"/>
</dbReference>
<dbReference type="GO" id="GO:0022857">
    <property type="term" value="F:transmembrane transporter activity"/>
    <property type="evidence" value="ECO:0007669"/>
    <property type="project" value="InterPro"/>
</dbReference>
<dbReference type="Gene3D" id="1.20.1250.20">
    <property type="entry name" value="MFS general substrate transporter like domains"/>
    <property type="match status" value="3"/>
</dbReference>
<dbReference type="InterPro" id="IPR011701">
    <property type="entry name" value="MFS"/>
</dbReference>
<dbReference type="InterPro" id="IPR036259">
    <property type="entry name" value="MFS_trans_sf"/>
</dbReference>
<dbReference type="PANTHER" id="PTHR43791:SF41">
    <property type="entry name" value="MAJOR FACILITATOR SUPERFAMILY (MFS) PROFILE DOMAIN-CONTAINING PROTEIN"/>
    <property type="match status" value="1"/>
</dbReference>
<dbReference type="PANTHER" id="PTHR43791">
    <property type="entry name" value="PERMEASE-RELATED"/>
    <property type="match status" value="1"/>
</dbReference>
<dbReference type="Pfam" id="PF07690">
    <property type="entry name" value="MFS_1"/>
    <property type="match status" value="1"/>
</dbReference>
<dbReference type="SUPFAM" id="SSF103473">
    <property type="entry name" value="MFS general substrate transporter"/>
    <property type="match status" value="1"/>
</dbReference>
<comment type="function">
    <text evidence="3 6">MFS-type transporter; part of the gene cluster that mediates the biosynthesis of communesins, a prominent class of indole alkaloids with great potential as pharmaceuticals (PubMed:25571861). With the MFS transporter cnsO, is most likely responsible for cummunesins secretion and thereby may contribute to intrinsic resistance (Probable).</text>
</comment>
<comment type="subcellular location">
    <subcellularLocation>
        <location evidence="5">Cell membrane</location>
        <topology evidence="1">Multi-pass membrane protein</topology>
    </subcellularLocation>
</comment>
<comment type="similarity">
    <text evidence="1">Belongs to the major facilitator superfamily. Allantoate permease family.</text>
</comment>
<evidence type="ECO:0000255" key="1"/>
<evidence type="ECO:0000255" key="2">
    <source>
        <dbReference type="PROSITE-ProRule" id="PRU00498"/>
    </source>
</evidence>
<evidence type="ECO:0000269" key="3">
    <source>
    </source>
</evidence>
<evidence type="ECO:0000303" key="4">
    <source>
    </source>
</evidence>
<evidence type="ECO:0000305" key="5"/>
<evidence type="ECO:0000305" key="6">
    <source>
    </source>
</evidence>
<accession>A0A0A2K5R6</accession>
<feature type="chain" id="PRO_0000446467" description="MFS-type transporter cnsL">
    <location>
        <begin position="1"/>
        <end position="482"/>
    </location>
</feature>
<feature type="transmembrane region" description="Helical" evidence="1">
    <location>
        <begin position="73"/>
        <end position="93"/>
    </location>
</feature>
<feature type="transmembrane region" description="Helical" evidence="1">
    <location>
        <begin position="108"/>
        <end position="128"/>
    </location>
</feature>
<feature type="transmembrane region" description="Helical" evidence="1">
    <location>
        <begin position="131"/>
        <end position="151"/>
    </location>
</feature>
<feature type="transmembrane region" description="Helical" evidence="1">
    <location>
        <begin position="170"/>
        <end position="190"/>
    </location>
</feature>
<feature type="transmembrane region" description="Helical" evidence="1">
    <location>
        <begin position="199"/>
        <end position="219"/>
    </location>
</feature>
<feature type="transmembrane region" description="Helical" evidence="1">
    <location>
        <begin position="304"/>
        <end position="324"/>
    </location>
</feature>
<feature type="transmembrane region" description="Helical" evidence="1">
    <location>
        <begin position="333"/>
        <end position="353"/>
    </location>
</feature>
<feature type="transmembrane region" description="Helical" evidence="1">
    <location>
        <begin position="361"/>
        <end position="381"/>
    </location>
</feature>
<feature type="transmembrane region" description="Helical" evidence="1">
    <location>
        <begin position="392"/>
        <end position="412"/>
    </location>
</feature>
<feature type="transmembrane region" description="Helical" evidence="1">
    <location>
        <begin position="426"/>
        <end position="446"/>
    </location>
</feature>
<feature type="glycosylation site" description="N-linked (GlcNAc...) asparagine" evidence="2">
    <location>
        <position position="100"/>
    </location>
</feature>
<name>CNSL_PENEN</name>
<protein>
    <recommendedName>
        <fullName evidence="4">MFS-type transporter cnsL</fullName>
    </recommendedName>
    <alternativeName>
        <fullName evidence="4">Communesin biosynthesis cluster protein L</fullName>
    </alternativeName>
</protein>
<organism>
    <name type="scientific">Penicillium expansum</name>
    <name type="common">Blue mold rot fungus</name>
    <dbReference type="NCBI Taxonomy" id="27334"/>
    <lineage>
        <taxon>Eukaryota</taxon>
        <taxon>Fungi</taxon>
        <taxon>Dikarya</taxon>
        <taxon>Ascomycota</taxon>
        <taxon>Pezizomycotina</taxon>
        <taxon>Eurotiomycetes</taxon>
        <taxon>Eurotiomycetidae</taxon>
        <taxon>Eurotiales</taxon>
        <taxon>Aspergillaceae</taxon>
        <taxon>Penicillium</taxon>
    </lineage>
</organism>